<gene>
    <name evidence="1" type="primary">miaA</name>
    <name type="ordered locus">STH1747</name>
</gene>
<accession>Q67NL1</accession>
<comment type="function">
    <text evidence="1">Catalyzes the transfer of a dimethylallyl group onto the adenine at position 37 in tRNAs that read codons beginning with uridine, leading to the formation of N6-(dimethylallyl)adenosine (i(6)A).</text>
</comment>
<comment type="catalytic activity">
    <reaction evidence="1">
        <text>adenosine(37) in tRNA + dimethylallyl diphosphate = N(6)-dimethylallyladenosine(37) in tRNA + diphosphate</text>
        <dbReference type="Rhea" id="RHEA:26482"/>
        <dbReference type="Rhea" id="RHEA-COMP:10162"/>
        <dbReference type="Rhea" id="RHEA-COMP:10375"/>
        <dbReference type="ChEBI" id="CHEBI:33019"/>
        <dbReference type="ChEBI" id="CHEBI:57623"/>
        <dbReference type="ChEBI" id="CHEBI:74411"/>
        <dbReference type="ChEBI" id="CHEBI:74415"/>
        <dbReference type="EC" id="2.5.1.75"/>
    </reaction>
</comment>
<comment type="cofactor">
    <cofactor evidence="1">
        <name>Mg(2+)</name>
        <dbReference type="ChEBI" id="CHEBI:18420"/>
    </cofactor>
</comment>
<comment type="subunit">
    <text evidence="1">Monomer.</text>
</comment>
<comment type="similarity">
    <text evidence="1">Belongs to the IPP transferase family.</text>
</comment>
<protein>
    <recommendedName>
        <fullName evidence="1">tRNA dimethylallyltransferase</fullName>
        <ecNumber evidence="1">2.5.1.75</ecNumber>
    </recommendedName>
    <alternativeName>
        <fullName evidence="1">Dimethylallyl diphosphate:tRNA dimethylallyltransferase</fullName>
        <shortName evidence="1">DMAPP:tRNA dimethylallyltransferase</shortName>
        <shortName evidence="1">DMATase</shortName>
    </alternativeName>
    <alternativeName>
        <fullName evidence="1">Isopentenyl-diphosphate:tRNA isopentenyltransferase</fullName>
        <shortName evidence="1">IPP transferase</shortName>
        <shortName evidence="1">IPPT</shortName>
        <shortName evidence="1">IPTase</shortName>
    </alternativeName>
</protein>
<evidence type="ECO:0000255" key="1">
    <source>
        <dbReference type="HAMAP-Rule" id="MF_00185"/>
    </source>
</evidence>
<proteinExistence type="inferred from homology"/>
<name>MIAA_SYMTH</name>
<reference key="1">
    <citation type="journal article" date="2004" name="Nucleic Acids Res.">
        <title>Genome sequence of Symbiobacterium thermophilum, an uncultivable bacterium that depends on microbial commensalism.</title>
        <authorList>
            <person name="Ueda K."/>
            <person name="Yamashita A."/>
            <person name="Ishikawa J."/>
            <person name="Shimada M."/>
            <person name="Watsuji T."/>
            <person name="Morimura K."/>
            <person name="Ikeda H."/>
            <person name="Hattori M."/>
            <person name="Beppu T."/>
        </authorList>
    </citation>
    <scope>NUCLEOTIDE SEQUENCE [LARGE SCALE GENOMIC DNA]</scope>
    <source>
        <strain>DSM 24528 / JCM 14929 / IAM 14863 / T</strain>
    </source>
</reference>
<organism>
    <name type="scientific">Symbiobacterium thermophilum (strain DSM 24528 / JCM 14929 / IAM 14863 / T)</name>
    <dbReference type="NCBI Taxonomy" id="292459"/>
    <lineage>
        <taxon>Bacteria</taxon>
        <taxon>Bacillati</taxon>
        <taxon>Bacillota</taxon>
        <taxon>Clostridia</taxon>
        <taxon>Eubacteriales</taxon>
        <taxon>Symbiobacteriaceae</taxon>
        <taxon>Symbiobacterium</taxon>
    </lineage>
</organism>
<feature type="chain" id="PRO_0000163991" description="tRNA dimethylallyltransferase">
    <location>
        <begin position="1"/>
        <end position="319"/>
    </location>
</feature>
<feature type="region of interest" description="Interaction with substrate tRNA" evidence="1">
    <location>
        <begin position="35"/>
        <end position="38"/>
    </location>
</feature>
<feature type="binding site" evidence="1">
    <location>
        <begin position="10"/>
        <end position="17"/>
    </location>
    <ligand>
        <name>ATP</name>
        <dbReference type="ChEBI" id="CHEBI:30616"/>
    </ligand>
</feature>
<feature type="binding site" evidence="1">
    <location>
        <begin position="12"/>
        <end position="17"/>
    </location>
    <ligand>
        <name>substrate</name>
    </ligand>
</feature>
<feature type="site" description="Interaction with substrate tRNA" evidence="1">
    <location>
        <position position="101"/>
    </location>
</feature>
<feature type="site" description="Interaction with substrate tRNA" evidence="1">
    <location>
        <position position="124"/>
    </location>
</feature>
<sequence>MKLPLVVLVGPTAVGKTALSVAVAQAVGAEIISGDSMQVYRGMDIGTAKIRPEEMGGVPHHLIDIKDPDEEFSVAEFQARVDALIPQICARGRLPMLVGGTGLYVRAVVEKYTFTPMEADHELRARLRQEEERHGPGYLHARLREVDPASAARLHPNDLLRIVRALEVYEQTGVPISATQTAAFSEPRYDDLMIGLTMDRAQLYARIDERVDAMLAAGWLDEVRGLLVRYPPHVRAMQALGYRELVLYLRGLLTWEEAVALIKRNTRRFAKRQFTWFRKERRLTWLDLTGPEARNRATEEIVRLIREKWPCRERKGRIE</sequence>
<keyword id="KW-0067">ATP-binding</keyword>
<keyword id="KW-0460">Magnesium</keyword>
<keyword id="KW-0547">Nucleotide-binding</keyword>
<keyword id="KW-1185">Reference proteome</keyword>
<keyword id="KW-0808">Transferase</keyword>
<keyword id="KW-0819">tRNA processing</keyword>
<dbReference type="EC" id="2.5.1.75" evidence="1"/>
<dbReference type="EMBL" id="AP006840">
    <property type="protein sequence ID" value="BAD40732.1"/>
    <property type="molecule type" value="Genomic_DNA"/>
</dbReference>
<dbReference type="RefSeq" id="WP_011195875.1">
    <property type="nucleotide sequence ID" value="NC_006177.1"/>
</dbReference>
<dbReference type="SMR" id="Q67NL1"/>
<dbReference type="STRING" id="292459.STH1747"/>
<dbReference type="KEGG" id="sth:STH1747"/>
<dbReference type="eggNOG" id="COG0324">
    <property type="taxonomic scope" value="Bacteria"/>
</dbReference>
<dbReference type="HOGENOM" id="CLU_032616_0_1_9"/>
<dbReference type="OrthoDB" id="9776390at2"/>
<dbReference type="Proteomes" id="UP000000417">
    <property type="component" value="Chromosome"/>
</dbReference>
<dbReference type="GO" id="GO:0005524">
    <property type="term" value="F:ATP binding"/>
    <property type="evidence" value="ECO:0007669"/>
    <property type="project" value="UniProtKB-UniRule"/>
</dbReference>
<dbReference type="GO" id="GO:0052381">
    <property type="term" value="F:tRNA dimethylallyltransferase activity"/>
    <property type="evidence" value="ECO:0007669"/>
    <property type="project" value="UniProtKB-UniRule"/>
</dbReference>
<dbReference type="GO" id="GO:0006400">
    <property type="term" value="P:tRNA modification"/>
    <property type="evidence" value="ECO:0007669"/>
    <property type="project" value="TreeGrafter"/>
</dbReference>
<dbReference type="FunFam" id="1.10.20.140:FF:000001">
    <property type="entry name" value="tRNA dimethylallyltransferase"/>
    <property type="match status" value="1"/>
</dbReference>
<dbReference type="Gene3D" id="1.10.20.140">
    <property type="match status" value="1"/>
</dbReference>
<dbReference type="Gene3D" id="3.40.50.300">
    <property type="entry name" value="P-loop containing nucleotide triphosphate hydrolases"/>
    <property type="match status" value="1"/>
</dbReference>
<dbReference type="HAMAP" id="MF_00185">
    <property type="entry name" value="IPP_trans"/>
    <property type="match status" value="1"/>
</dbReference>
<dbReference type="InterPro" id="IPR039657">
    <property type="entry name" value="Dimethylallyltransferase"/>
</dbReference>
<dbReference type="InterPro" id="IPR018022">
    <property type="entry name" value="IPT"/>
</dbReference>
<dbReference type="InterPro" id="IPR027417">
    <property type="entry name" value="P-loop_NTPase"/>
</dbReference>
<dbReference type="NCBIfam" id="TIGR00174">
    <property type="entry name" value="miaA"/>
    <property type="match status" value="1"/>
</dbReference>
<dbReference type="PANTHER" id="PTHR11088">
    <property type="entry name" value="TRNA DIMETHYLALLYLTRANSFERASE"/>
    <property type="match status" value="1"/>
</dbReference>
<dbReference type="PANTHER" id="PTHR11088:SF60">
    <property type="entry name" value="TRNA DIMETHYLALLYLTRANSFERASE"/>
    <property type="match status" value="1"/>
</dbReference>
<dbReference type="Pfam" id="PF01715">
    <property type="entry name" value="IPPT"/>
    <property type="match status" value="1"/>
</dbReference>
<dbReference type="SUPFAM" id="SSF52540">
    <property type="entry name" value="P-loop containing nucleoside triphosphate hydrolases"/>
    <property type="match status" value="2"/>
</dbReference>